<accession>Q9H497</accession>
<accession>B4DSY0</accession>
<accession>B7ZB65</accession>
<accession>Q5M7Y7</accession>
<accession>Q8WVA7</accession>
<accession>Q8WWM2</accession>
<accession>Q9H495</accession>
<accession>Q9H6E7</accession>
<feature type="signal peptide" evidence="1">
    <location>
        <begin position="1"/>
        <end position="25"/>
    </location>
</feature>
<feature type="chain" id="PRO_0000228147" description="Torsin-3A">
    <location>
        <begin position="26"/>
        <end position="397"/>
    </location>
</feature>
<feature type="binding site" evidence="1">
    <location>
        <begin position="167"/>
        <end position="174"/>
    </location>
    <ligand>
        <name>ATP</name>
        <dbReference type="ChEBI" id="CHEBI:30616"/>
    </ligand>
</feature>
<feature type="glycosylation site" description="N-linked (GlcNAc...) asparagine" evidence="1">
    <location>
        <position position="122"/>
    </location>
</feature>
<feature type="splice variant" id="VSP_017665" description="In isoform 3." evidence="8 9">
    <location>
        <begin position="1"/>
        <end position="216"/>
    </location>
</feature>
<feature type="splice variant" id="VSP_017666" description="In isoform 2." evidence="7">
    <original>DNGFGHSRLVKENLIDYFIPFL</original>
    <variation>GFSFLTTRWPHLDLPTSSVAPT</variation>
    <location>
        <begin position="315"/>
        <end position="336"/>
    </location>
</feature>
<feature type="splice variant" id="VSP_017667" description="In isoform 2." evidence="7">
    <location>
        <begin position="337"/>
        <end position="397"/>
    </location>
</feature>
<feature type="sequence variant" id="VAR_025697" description="In dbSNP:rs2296377." evidence="3 4 6">
    <original>F</original>
    <variation>L</variation>
    <location>
        <position position="13"/>
    </location>
</feature>
<feature type="mutagenesis site" description="No effect on subcellular location." evidence="5">
    <original>E</original>
    <variation>Q</variation>
    <location>
        <position position="236"/>
    </location>
</feature>
<feature type="sequence conflict" description="In Ref. 5; AAH18292." evidence="10" ref="5">
    <original>L</original>
    <variation>P</variation>
    <location>
        <position position="272"/>
    </location>
</feature>
<sequence length="397" mass="46199">MLRGPWRQLWLFFLLLLPGAPEPRGASRPWEGTDEPGSAWAWPGFQRLQEQLRAAGALSKRYWTLFSCQVWPDDCDEDEEAATGPLGWRLPLLGQRYLDLLTTWYCSFKDCCPRGDCRISNNFTGLEWDLNVRLHGQHLVQQLVLRTVRGYLETPQPEKALALSFHGWSGTGKNFVARMLVENLYRDGLMSDCVRMFIATFHFPHPKYVDLYKEQLMSQIRETQQLCHQTLFIFDEAEKLHPGLLEVLGPHLERRAPEGHRAESPWTIFLFLSNLRGDIINEVVLKLLKAGWSREEITMEHLEPHLQAEIVETIDNGFGHSRLVKENLIDYFIPFLPLEYRHVRLCARDAFLSQELLYKEETLDEIAQMMVYVPKEEQLFSSQGCKSISQRINYFLS</sequence>
<keyword id="KW-0025">Alternative splicing</keyword>
<keyword id="KW-0067">ATP-binding</keyword>
<keyword id="KW-0963">Cytoplasm</keyword>
<keyword id="KW-0256">Endoplasmic reticulum</keyword>
<keyword id="KW-0325">Glycoprotein</keyword>
<keyword id="KW-0547">Nucleotide-binding</keyword>
<keyword id="KW-1267">Proteomics identification</keyword>
<keyword id="KW-1185">Reference proteome</keyword>
<keyword id="KW-0732">Signal</keyword>
<evidence type="ECO:0000255" key="1"/>
<evidence type="ECO:0000269" key="2">
    <source>
    </source>
</evidence>
<evidence type="ECO:0000269" key="3">
    <source>
    </source>
</evidence>
<evidence type="ECO:0000269" key="4">
    <source>
    </source>
</evidence>
<evidence type="ECO:0000269" key="5">
    <source>
    </source>
</evidence>
<evidence type="ECO:0000269" key="6">
    <source ref="3"/>
</evidence>
<evidence type="ECO:0000303" key="7">
    <source>
    </source>
</evidence>
<evidence type="ECO:0000303" key="8">
    <source>
    </source>
</evidence>
<evidence type="ECO:0000303" key="9">
    <source>
    </source>
</evidence>
<evidence type="ECO:0000305" key="10"/>
<protein>
    <recommendedName>
        <fullName>Torsin-3A</fullName>
    </recommendedName>
    <alternativeName>
        <fullName>ATP-dependent interferon-responsive protein</fullName>
    </alternativeName>
    <alternativeName>
        <fullName>Torsin family 3 member A</fullName>
    </alternativeName>
</protein>
<organism>
    <name type="scientific">Homo sapiens</name>
    <name type="common">Human</name>
    <dbReference type="NCBI Taxonomy" id="9606"/>
    <lineage>
        <taxon>Eukaryota</taxon>
        <taxon>Metazoa</taxon>
        <taxon>Chordata</taxon>
        <taxon>Craniata</taxon>
        <taxon>Vertebrata</taxon>
        <taxon>Euteleostomi</taxon>
        <taxon>Mammalia</taxon>
        <taxon>Eutheria</taxon>
        <taxon>Euarchontoglires</taxon>
        <taxon>Primates</taxon>
        <taxon>Haplorrhini</taxon>
        <taxon>Catarrhini</taxon>
        <taxon>Hominidae</taxon>
        <taxon>Homo</taxon>
    </lineage>
</organism>
<dbReference type="EMBL" id="AJ299403">
    <property type="protein sequence ID" value="CAC13973.1"/>
    <property type="molecule type" value="mRNA"/>
</dbReference>
<dbReference type="EMBL" id="AJ299441">
    <property type="protein sequence ID" value="CAC14461.1"/>
    <property type="molecule type" value="mRNA"/>
</dbReference>
<dbReference type="EMBL" id="AJ318044">
    <property type="protein sequence ID" value="CAC88129.1"/>
    <property type="molecule type" value="Genomic_DNA"/>
</dbReference>
<dbReference type="EMBL" id="AJ318045">
    <property type="protein sequence ID" value="CAC88129.1"/>
    <property type="status" value="JOINED"/>
    <property type="molecule type" value="Genomic_DNA"/>
</dbReference>
<dbReference type="EMBL" id="AJ318046">
    <property type="protein sequence ID" value="CAC88129.1"/>
    <property type="status" value="JOINED"/>
    <property type="molecule type" value="Genomic_DNA"/>
</dbReference>
<dbReference type="EMBL" id="AJ318047">
    <property type="protein sequence ID" value="CAC88129.1"/>
    <property type="status" value="JOINED"/>
    <property type="molecule type" value="Genomic_DNA"/>
</dbReference>
<dbReference type="EMBL" id="AJ318048">
    <property type="protein sequence ID" value="CAC88129.1"/>
    <property type="status" value="JOINED"/>
    <property type="molecule type" value="Genomic_DNA"/>
</dbReference>
<dbReference type="EMBL" id="AJ318049">
    <property type="protein sequence ID" value="CAC88129.1"/>
    <property type="status" value="JOINED"/>
    <property type="molecule type" value="Genomic_DNA"/>
</dbReference>
<dbReference type="EMBL" id="AJ318044">
    <property type="protein sequence ID" value="CAC88130.1"/>
    <property type="molecule type" value="Genomic_DNA"/>
</dbReference>
<dbReference type="EMBL" id="AJ318045">
    <property type="protein sequence ID" value="CAC88130.1"/>
    <property type="status" value="JOINED"/>
    <property type="molecule type" value="Genomic_DNA"/>
</dbReference>
<dbReference type="EMBL" id="AJ318046">
    <property type="protein sequence ID" value="CAC88130.1"/>
    <property type="status" value="JOINED"/>
    <property type="molecule type" value="Genomic_DNA"/>
</dbReference>
<dbReference type="EMBL" id="AJ318047">
    <property type="protein sequence ID" value="CAC88130.1"/>
    <property type="status" value="JOINED"/>
    <property type="molecule type" value="Genomic_DNA"/>
</dbReference>
<dbReference type="EMBL" id="AJ318048">
    <property type="protein sequence ID" value="CAC88130.1"/>
    <property type="status" value="JOINED"/>
    <property type="molecule type" value="Genomic_DNA"/>
</dbReference>
<dbReference type="EMBL" id="AJ318050">
    <property type="protein sequence ID" value="CAC88130.1"/>
    <property type="status" value="JOINED"/>
    <property type="molecule type" value="Genomic_DNA"/>
</dbReference>
<dbReference type="EMBL" id="AK025998">
    <property type="protein sequence ID" value="BAB15312.1"/>
    <property type="molecule type" value="mRNA"/>
</dbReference>
<dbReference type="EMBL" id="CR457354">
    <property type="protein sequence ID" value="CAG33635.1"/>
    <property type="molecule type" value="mRNA"/>
</dbReference>
<dbReference type="EMBL" id="AK299966">
    <property type="protein sequence ID" value="BAG61792.1"/>
    <property type="molecule type" value="mRNA"/>
</dbReference>
<dbReference type="EMBL" id="AK316530">
    <property type="protein sequence ID" value="BAH14901.1"/>
    <property type="molecule type" value="mRNA"/>
</dbReference>
<dbReference type="EMBL" id="AL139132">
    <property type="protein sequence ID" value="CAH70928.1"/>
    <property type="molecule type" value="Genomic_DNA"/>
</dbReference>
<dbReference type="EMBL" id="AL139132">
    <property type="protein sequence ID" value="CAH70929.1"/>
    <property type="molecule type" value="Genomic_DNA"/>
</dbReference>
<dbReference type="EMBL" id="BC001085">
    <property type="protein sequence ID" value="AAH01085.1"/>
    <property type="molecule type" value="mRNA"/>
</dbReference>
<dbReference type="EMBL" id="BC007571">
    <property type="protein sequence ID" value="AAH07571.1"/>
    <property type="molecule type" value="mRNA"/>
</dbReference>
<dbReference type="EMBL" id="BC011746">
    <property type="protein sequence ID" value="AAH11746.1"/>
    <property type="molecule type" value="mRNA"/>
</dbReference>
<dbReference type="EMBL" id="BC018292">
    <property type="protein sequence ID" value="AAH18292.1"/>
    <property type="molecule type" value="mRNA"/>
</dbReference>
<dbReference type="EMBL" id="BC088368">
    <property type="protein sequence ID" value="AAH88368.1"/>
    <property type="molecule type" value="mRNA"/>
</dbReference>
<dbReference type="CCDS" id="CCDS1329.1">
    <molecule id="Q9H497-1"/>
</dbReference>
<dbReference type="RefSeq" id="NP_071766.2">
    <molecule id="Q9H497-1"/>
    <property type="nucleotide sequence ID" value="NM_022371.4"/>
</dbReference>
<dbReference type="SMR" id="Q9H497"/>
<dbReference type="BioGRID" id="122112">
    <property type="interactions" value="133"/>
</dbReference>
<dbReference type="DIP" id="DIP-59333N"/>
<dbReference type="FunCoup" id="Q9H497">
    <property type="interactions" value="717"/>
</dbReference>
<dbReference type="IntAct" id="Q9H497">
    <property type="interactions" value="69"/>
</dbReference>
<dbReference type="MINT" id="Q9H497"/>
<dbReference type="STRING" id="9606.ENSP00000356599"/>
<dbReference type="GlyCosmos" id="Q9H497">
    <property type="glycosylation" value="1 site, No reported glycans"/>
</dbReference>
<dbReference type="GlyGen" id="Q9H497">
    <property type="glycosylation" value="2 sites, 4 N-linked glycans (1 site)"/>
</dbReference>
<dbReference type="iPTMnet" id="Q9H497"/>
<dbReference type="PhosphoSitePlus" id="Q9H497"/>
<dbReference type="BioMuta" id="TOR3A"/>
<dbReference type="DMDM" id="74752636"/>
<dbReference type="jPOST" id="Q9H497"/>
<dbReference type="MassIVE" id="Q9H497"/>
<dbReference type="PaxDb" id="9606-ENSP00000356599"/>
<dbReference type="PeptideAtlas" id="Q9H497"/>
<dbReference type="ProteomicsDB" id="80801">
    <molecule id="Q9H497-1"/>
</dbReference>
<dbReference type="ProteomicsDB" id="80802">
    <molecule id="Q9H497-2"/>
</dbReference>
<dbReference type="ProteomicsDB" id="80803">
    <molecule id="Q9H497-3"/>
</dbReference>
<dbReference type="Pumba" id="Q9H497"/>
<dbReference type="Antibodypedia" id="20580">
    <property type="antibodies" value="138 antibodies from 23 providers"/>
</dbReference>
<dbReference type="DNASU" id="64222"/>
<dbReference type="Ensembl" id="ENST00000352445.10">
    <molecule id="Q9H497-2"/>
    <property type="protein sequence ID" value="ENSP00000335351.6"/>
    <property type="gene ID" value="ENSG00000186283.14"/>
</dbReference>
<dbReference type="Ensembl" id="ENST00000367627.8">
    <molecule id="Q9H497-1"/>
    <property type="protein sequence ID" value="ENSP00000356599.3"/>
    <property type="gene ID" value="ENSG00000186283.14"/>
</dbReference>
<dbReference type="GeneID" id="64222"/>
<dbReference type="KEGG" id="hsa:64222"/>
<dbReference type="MANE-Select" id="ENST00000367627.8">
    <property type="protein sequence ID" value="ENSP00000356599.3"/>
    <property type="RefSeq nucleotide sequence ID" value="NM_022371.4"/>
    <property type="RefSeq protein sequence ID" value="NP_071766.2"/>
</dbReference>
<dbReference type="UCSC" id="uc001gmd.4">
    <molecule id="Q9H497-1"/>
    <property type="organism name" value="human"/>
</dbReference>
<dbReference type="AGR" id="HGNC:11997"/>
<dbReference type="CTD" id="64222"/>
<dbReference type="DisGeNET" id="64222"/>
<dbReference type="GeneCards" id="TOR3A"/>
<dbReference type="HGNC" id="HGNC:11997">
    <property type="gene designation" value="TOR3A"/>
</dbReference>
<dbReference type="HPA" id="ENSG00000186283">
    <property type="expression patterns" value="Low tissue specificity"/>
</dbReference>
<dbReference type="MIM" id="607555">
    <property type="type" value="gene"/>
</dbReference>
<dbReference type="neXtProt" id="NX_Q9H497"/>
<dbReference type="OpenTargets" id="ENSG00000186283"/>
<dbReference type="PharmGKB" id="PA36678"/>
<dbReference type="VEuPathDB" id="HostDB:ENSG00000186283"/>
<dbReference type="eggNOG" id="KOG2170">
    <property type="taxonomic scope" value="Eukaryota"/>
</dbReference>
<dbReference type="GeneTree" id="ENSGT00950000182888"/>
<dbReference type="HOGENOM" id="CLU_053537_0_0_1"/>
<dbReference type="InParanoid" id="Q9H497"/>
<dbReference type="OMA" id="FYCNIWE"/>
<dbReference type="OrthoDB" id="19623at2759"/>
<dbReference type="PAN-GO" id="Q9H497">
    <property type="GO annotations" value="2 GO annotations based on evolutionary models"/>
</dbReference>
<dbReference type="PhylomeDB" id="Q9H497"/>
<dbReference type="TreeFam" id="TF314941"/>
<dbReference type="PathwayCommons" id="Q9H497"/>
<dbReference type="SignaLink" id="Q9H497"/>
<dbReference type="BioGRID-ORCS" id="64222">
    <property type="hits" value="26 hits in 1161 CRISPR screens"/>
</dbReference>
<dbReference type="ChiTaRS" id="TOR3A">
    <property type="organism name" value="human"/>
</dbReference>
<dbReference type="GenomeRNAi" id="64222"/>
<dbReference type="Pharos" id="Q9H497">
    <property type="development level" value="Tbio"/>
</dbReference>
<dbReference type="PRO" id="PR:Q9H497"/>
<dbReference type="Proteomes" id="UP000005640">
    <property type="component" value="Chromosome 1"/>
</dbReference>
<dbReference type="RNAct" id="Q9H497">
    <property type="molecule type" value="protein"/>
</dbReference>
<dbReference type="Bgee" id="ENSG00000186283">
    <property type="expression patterns" value="Expressed in oocyte and 189 other cell types or tissues"/>
</dbReference>
<dbReference type="ExpressionAtlas" id="Q9H497">
    <property type="expression patterns" value="baseline and differential"/>
</dbReference>
<dbReference type="GO" id="GO:0005783">
    <property type="term" value="C:endoplasmic reticulum"/>
    <property type="evidence" value="ECO:0000314"/>
    <property type="project" value="UniProtKB"/>
</dbReference>
<dbReference type="GO" id="GO:0005788">
    <property type="term" value="C:endoplasmic reticulum lumen"/>
    <property type="evidence" value="ECO:0000314"/>
    <property type="project" value="UniProtKB"/>
</dbReference>
<dbReference type="GO" id="GO:0070062">
    <property type="term" value="C:extracellular exosome"/>
    <property type="evidence" value="ECO:0007005"/>
    <property type="project" value="UniProtKB"/>
</dbReference>
<dbReference type="GO" id="GO:0005635">
    <property type="term" value="C:nuclear envelope"/>
    <property type="evidence" value="ECO:0000318"/>
    <property type="project" value="GO_Central"/>
</dbReference>
<dbReference type="GO" id="GO:0005524">
    <property type="term" value="F:ATP binding"/>
    <property type="evidence" value="ECO:0007669"/>
    <property type="project" value="UniProtKB-KW"/>
</dbReference>
<dbReference type="GO" id="GO:0016887">
    <property type="term" value="F:ATP hydrolysis activity"/>
    <property type="evidence" value="ECO:0000314"/>
    <property type="project" value="UniProtKB"/>
</dbReference>
<dbReference type="FunFam" id="3.40.50.300:FF:001211">
    <property type="entry name" value="Torsin family 3 member A"/>
    <property type="match status" value="1"/>
</dbReference>
<dbReference type="Gene3D" id="3.40.50.300">
    <property type="entry name" value="P-loop containing nucleotide triphosphate hydrolases"/>
    <property type="match status" value="1"/>
</dbReference>
<dbReference type="InterPro" id="IPR027417">
    <property type="entry name" value="P-loop_NTPase"/>
</dbReference>
<dbReference type="InterPro" id="IPR049337">
    <property type="entry name" value="TOR1A_C"/>
</dbReference>
<dbReference type="InterPro" id="IPR010448">
    <property type="entry name" value="Torsin"/>
</dbReference>
<dbReference type="PANTHER" id="PTHR10760">
    <property type="entry name" value="TORSIN"/>
    <property type="match status" value="1"/>
</dbReference>
<dbReference type="PANTHER" id="PTHR10760:SF3">
    <property type="entry name" value="TORSIN-3A"/>
    <property type="match status" value="1"/>
</dbReference>
<dbReference type="Pfam" id="PF21376">
    <property type="entry name" value="TOR1A_C"/>
    <property type="match status" value="1"/>
</dbReference>
<dbReference type="Pfam" id="PF06309">
    <property type="entry name" value="Torsin"/>
    <property type="match status" value="1"/>
</dbReference>
<dbReference type="SUPFAM" id="SSF52540">
    <property type="entry name" value="P-loop containing nucleoside triphosphate hydrolases"/>
    <property type="match status" value="1"/>
</dbReference>
<comment type="subunit">
    <text evidence="5">May not form homohexamers.</text>
</comment>
<comment type="subcellular location">
    <subcellularLocation>
        <location>Cytoplasm</location>
    </subcellularLocation>
    <subcellularLocation>
        <location>Endoplasmic reticulum lumen</location>
    </subcellularLocation>
</comment>
<comment type="alternative products">
    <event type="alternative splicing"/>
    <isoform>
        <id>Q9H497-1</id>
        <name>1</name>
        <name>ADIR1</name>
        <sequence type="displayed"/>
    </isoform>
    <isoform>
        <id>Q9H497-2</id>
        <name>2</name>
        <name>ADIR2</name>
        <sequence type="described" ref="VSP_017666 VSP_017667"/>
    </isoform>
    <isoform>
        <id>Q9H497-3</id>
        <name>3</name>
        <sequence type="described" ref="VSP_017665"/>
    </isoform>
</comment>
<comment type="tissue specificity">
    <text evidence="2">Ubiquitously expressed. Highest expression in stomach, salivary glands and lymph nodes. Isoform 2 is expressed in placenta.</text>
</comment>
<comment type="PTM">
    <text evidence="5">N-glycosylated.</text>
</comment>
<comment type="similarity">
    <text evidence="10">Belongs to the ClpA/ClpB family. Torsin subfamily.</text>
</comment>
<reference key="1">
    <citation type="journal article" date="2002" name="Genomics">
        <title>Molecular cloning of ADIR, a novel interferon responsive gene encoding a protein related to the torsins.</title>
        <authorList>
            <person name="Dron M."/>
            <person name="Meritet J.F."/>
            <person name="Dandoy-Dron F."/>
            <person name="Meyniel J.P."/>
            <person name="Maury C."/>
            <person name="Tovey M.G."/>
        </authorList>
    </citation>
    <scope>NUCLEOTIDE SEQUENCE [GENOMIC DNA / MRNA] (ISOFORMS 1 AND 2)</scope>
    <scope>TISSUE SPECIFICITY</scope>
    <scope>SUBCELLULAR LOCATION</scope>
    <source>
        <tissue>Lymphoma</tissue>
    </source>
</reference>
<reference key="2">
    <citation type="journal article" date="2004" name="Nat. Genet.">
        <title>Complete sequencing and characterization of 21,243 full-length human cDNAs.</title>
        <authorList>
            <person name="Ota T."/>
            <person name="Suzuki Y."/>
            <person name="Nishikawa T."/>
            <person name="Otsuki T."/>
            <person name="Sugiyama T."/>
            <person name="Irie R."/>
            <person name="Wakamatsu A."/>
            <person name="Hayashi K."/>
            <person name="Sato H."/>
            <person name="Nagai K."/>
            <person name="Kimura K."/>
            <person name="Makita H."/>
            <person name="Sekine M."/>
            <person name="Obayashi M."/>
            <person name="Nishi T."/>
            <person name="Shibahara T."/>
            <person name="Tanaka T."/>
            <person name="Ishii S."/>
            <person name="Yamamoto J."/>
            <person name="Saito K."/>
            <person name="Kawai Y."/>
            <person name="Isono Y."/>
            <person name="Nakamura Y."/>
            <person name="Nagahari K."/>
            <person name="Murakami K."/>
            <person name="Yasuda T."/>
            <person name="Iwayanagi T."/>
            <person name="Wagatsuma M."/>
            <person name="Shiratori A."/>
            <person name="Sudo H."/>
            <person name="Hosoiri T."/>
            <person name="Kaku Y."/>
            <person name="Kodaira H."/>
            <person name="Kondo H."/>
            <person name="Sugawara M."/>
            <person name="Takahashi M."/>
            <person name="Kanda K."/>
            <person name="Yokoi T."/>
            <person name="Furuya T."/>
            <person name="Kikkawa E."/>
            <person name="Omura Y."/>
            <person name="Abe K."/>
            <person name="Kamihara K."/>
            <person name="Katsuta N."/>
            <person name="Sato K."/>
            <person name="Tanikawa M."/>
            <person name="Yamazaki M."/>
            <person name="Ninomiya K."/>
            <person name="Ishibashi T."/>
            <person name="Yamashita H."/>
            <person name="Murakawa K."/>
            <person name="Fujimori K."/>
            <person name="Tanai H."/>
            <person name="Kimata M."/>
            <person name="Watanabe M."/>
            <person name="Hiraoka S."/>
            <person name="Chiba Y."/>
            <person name="Ishida S."/>
            <person name="Ono Y."/>
            <person name="Takiguchi S."/>
            <person name="Watanabe S."/>
            <person name="Yosida M."/>
            <person name="Hotuta T."/>
            <person name="Kusano J."/>
            <person name="Kanehori K."/>
            <person name="Takahashi-Fujii A."/>
            <person name="Hara H."/>
            <person name="Tanase T.-O."/>
            <person name="Nomura Y."/>
            <person name="Togiya S."/>
            <person name="Komai F."/>
            <person name="Hara R."/>
            <person name="Takeuchi K."/>
            <person name="Arita M."/>
            <person name="Imose N."/>
            <person name="Musashino K."/>
            <person name="Yuuki H."/>
            <person name="Oshima A."/>
            <person name="Sasaki N."/>
            <person name="Aotsuka S."/>
            <person name="Yoshikawa Y."/>
            <person name="Matsunawa H."/>
            <person name="Ichihara T."/>
            <person name="Shiohata N."/>
            <person name="Sano S."/>
            <person name="Moriya S."/>
            <person name="Momiyama H."/>
            <person name="Satoh N."/>
            <person name="Takami S."/>
            <person name="Terashima Y."/>
            <person name="Suzuki O."/>
            <person name="Nakagawa S."/>
            <person name="Senoh A."/>
            <person name="Mizoguchi H."/>
            <person name="Goto Y."/>
            <person name="Shimizu F."/>
            <person name="Wakebe H."/>
            <person name="Hishigaki H."/>
            <person name="Watanabe T."/>
            <person name="Sugiyama A."/>
            <person name="Takemoto M."/>
            <person name="Kawakami B."/>
            <person name="Yamazaki M."/>
            <person name="Watanabe K."/>
            <person name="Kumagai A."/>
            <person name="Itakura S."/>
            <person name="Fukuzumi Y."/>
            <person name="Fujimori Y."/>
            <person name="Komiyama M."/>
            <person name="Tashiro H."/>
            <person name="Tanigami A."/>
            <person name="Fujiwara T."/>
            <person name="Ono T."/>
            <person name="Yamada K."/>
            <person name="Fujii Y."/>
            <person name="Ozaki K."/>
            <person name="Hirao M."/>
            <person name="Ohmori Y."/>
            <person name="Kawabata A."/>
            <person name="Hikiji T."/>
            <person name="Kobatake N."/>
            <person name="Inagaki H."/>
            <person name="Ikema Y."/>
            <person name="Okamoto S."/>
            <person name="Okitani R."/>
            <person name="Kawakami T."/>
            <person name="Noguchi S."/>
            <person name="Itoh T."/>
            <person name="Shigeta K."/>
            <person name="Senba T."/>
            <person name="Matsumura K."/>
            <person name="Nakajima Y."/>
            <person name="Mizuno T."/>
            <person name="Morinaga M."/>
            <person name="Sasaki M."/>
            <person name="Togashi T."/>
            <person name="Oyama M."/>
            <person name="Hata H."/>
            <person name="Watanabe M."/>
            <person name="Komatsu T."/>
            <person name="Mizushima-Sugano J."/>
            <person name="Satoh T."/>
            <person name="Shirai Y."/>
            <person name="Takahashi Y."/>
            <person name="Nakagawa K."/>
            <person name="Okumura K."/>
            <person name="Nagase T."/>
            <person name="Nomura N."/>
            <person name="Kikuchi H."/>
            <person name="Masuho Y."/>
            <person name="Yamashita R."/>
            <person name="Nakai K."/>
            <person name="Yada T."/>
            <person name="Nakamura Y."/>
            <person name="Ohara O."/>
            <person name="Isogai T."/>
            <person name="Sugano S."/>
        </authorList>
    </citation>
    <scope>NUCLEOTIDE SEQUENCE [LARGE SCALE MRNA] (ISOFORMS 1 AND 3)</scope>
    <scope>VARIANT LEU-13</scope>
    <source>
        <tissue>Kidney epithelium</tissue>
        <tissue>Pancreas</tissue>
        <tissue>Stomach</tissue>
    </source>
</reference>
<reference key="3">
    <citation type="submission" date="2004-06" db="EMBL/GenBank/DDBJ databases">
        <title>Cloning of human full open reading frames in Gateway(TM) system entry vector (pDONR201).</title>
        <authorList>
            <person name="Ebert L."/>
            <person name="Schick M."/>
            <person name="Neubert P."/>
            <person name="Schatten R."/>
            <person name="Henze S."/>
            <person name="Korn B."/>
        </authorList>
    </citation>
    <scope>NUCLEOTIDE SEQUENCE [LARGE SCALE MRNA] (ISOFORM 1)</scope>
    <scope>VARIANT LEU-13</scope>
</reference>
<reference key="4">
    <citation type="journal article" date="2006" name="Nature">
        <title>The DNA sequence and biological annotation of human chromosome 1.</title>
        <authorList>
            <person name="Gregory S.G."/>
            <person name="Barlow K.F."/>
            <person name="McLay K.E."/>
            <person name="Kaul R."/>
            <person name="Swarbreck D."/>
            <person name="Dunham A."/>
            <person name="Scott C.E."/>
            <person name="Howe K.L."/>
            <person name="Woodfine K."/>
            <person name="Spencer C.C.A."/>
            <person name="Jones M.C."/>
            <person name="Gillson C."/>
            <person name="Searle S."/>
            <person name="Zhou Y."/>
            <person name="Kokocinski F."/>
            <person name="McDonald L."/>
            <person name="Evans R."/>
            <person name="Phillips K."/>
            <person name="Atkinson A."/>
            <person name="Cooper R."/>
            <person name="Jones C."/>
            <person name="Hall R.E."/>
            <person name="Andrews T.D."/>
            <person name="Lloyd C."/>
            <person name="Ainscough R."/>
            <person name="Almeida J.P."/>
            <person name="Ambrose K.D."/>
            <person name="Anderson F."/>
            <person name="Andrew R.W."/>
            <person name="Ashwell R.I.S."/>
            <person name="Aubin K."/>
            <person name="Babbage A.K."/>
            <person name="Bagguley C.L."/>
            <person name="Bailey J."/>
            <person name="Beasley H."/>
            <person name="Bethel G."/>
            <person name="Bird C.P."/>
            <person name="Bray-Allen S."/>
            <person name="Brown J.Y."/>
            <person name="Brown A.J."/>
            <person name="Buckley D."/>
            <person name="Burton J."/>
            <person name="Bye J."/>
            <person name="Carder C."/>
            <person name="Chapman J.C."/>
            <person name="Clark S.Y."/>
            <person name="Clarke G."/>
            <person name="Clee C."/>
            <person name="Cobley V."/>
            <person name="Collier R.E."/>
            <person name="Corby N."/>
            <person name="Coville G.J."/>
            <person name="Davies J."/>
            <person name="Deadman R."/>
            <person name="Dunn M."/>
            <person name="Earthrowl M."/>
            <person name="Ellington A.G."/>
            <person name="Errington H."/>
            <person name="Frankish A."/>
            <person name="Frankland J."/>
            <person name="French L."/>
            <person name="Garner P."/>
            <person name="Garnett J."/>
            <person name="Gay L."/>
            <person name="Ghori M.R.J."/>
            <person name="Gibson R."/>
            <person name="Gilby L.M."/>
            <person name="Gillett W."/>
            <person name="Glithero R.J."/>
            <person name="Grafham D.V."/>
            <person name="Griffiths C."/>
            <person name="Griffiths-Jones S."/>
            <person name="Grocock R."/>
            <person name="Hammond S."/>
            <person name="Harrison E.S.I."/>
            <person name="Hart E."/>
            <person name="Haugen E."/>
            <person name="Heath P.D."/>
            <person name="Holmes S."/>
            <person name="Holt K."/>
            <person name="Howden P.J."/>
            <person name="Hunt A.R."/>
            <person name="Hunt S.E."/>
            <person name="Hunter G."/>
            <person name="Isherwood J."/>
            <person name="James R."/>
            <person name="Johnson C."/>
            <person name="Johnson D."/>
            <person name="Joy A."/>
            <person name="Kay M."/>
            <person name="Kershaw J.K."/>
            <person name="Kibukawa M."/>
            <person name="Kimberley A.M."/>
            <person name="King A."/>
            <person name="Knights A.J."/>
            <person name="Lad H."/>
            <person name="Laird G."/>
            <person name="Lawlor S."/>
            <person name="Leongamornlert D.A."/>
            <person name="Lloyd D.M."/>
            <person name="Loveland J."/>
            <person name="Lovell J."/>
            <person name="Lush M.J."/>
            <person name="Lyne R."/>
            <person name="Martin S."/>
            <person name="Mashreghi-Mohammadi M."/>
            <person name="Matthews L."/>
            <person name="Matthews N.S.W."/>
            <person name="McLaren S."/>
            <person name="Milne S."/>
            <person name="Mistry S."/>
            <person name="Moore M.J.F."/>
            <person name="Nickerson T."/>
            <person name="O'Dell C.N."/>
            <person name="Oliver K."/>
            <person name="Palmeiri A."/>
            <person name="Palmer S.A."/>
            <person name="Parker A."/>
            <person name="Patel D."/>
            <person name="Pearce A.V."/>
            <person name="Peck A.I."/>
            <person name="Pelan S."/>
            <person name="Phelps K."/>
            <person name="Phillimore B.J."/>
            <person name="Plumb R."/>
            <person name="Rajan J."/>
            <person name="Raymond C."/>
            <person name="Rouse G."/>
            <person name="Saenphimmachak C."/>
            <person name="Sehra H.K."/>
            <person name="Sheridan E."/>
            <person name="Shownkeen R."/>
            <person name="Sims S."/>
            <person name="Skuce C.D."/>
            <person name="Smith M."/>
            <person name="Steward C."/>
            <person name="Subramanian S."/>
            <person name="Sycamore N."/>
            <person name="Tracey A."/>
            <person name="Tromans A."/>
            <person name="Van Helmond Z."/>
            <person name="Wall M."/>
            <person name="Wallis J.M."/>
            <person name="White S."/>
            <person name="Whitehead S.L."/>
            <person name="Wilkinson J.E."/>
            <person name="Willey D.L."/>
            <person name="Williams H."/>
            <person name="Wilming L."/>
            <person name="Wray P.W."/>
            <person name="Wu Z."/>
            <person name="Coulson A."/>
            <person name="Vaudin M."/>
            <person name="Sulston J.E."/>
            <person name="Durbin R.M."/>
            <person name="Hubbard T."/>
            <person name="Wooster R."/>
            <person name="Dunham I."/>
            <person name="Carter N.P."/>
            <person name="McVean G."/>
            <person name="Ross M.T."/>
            <person name="Harrow J."/>
            <person name="Olson M.V."/>
            <person name="Beck S."/>
            <person name="Rogers J."/>
            <person name="Bentley D.R."/>
        </authorList>
    </citation>
    <scope>NUCLEOTIDE SEQUENCE [LARGE SCALE GENOMIC DNA]</scope>
</reference>
<reference key="5">
    <citation type="journal article" date="2004" name="Genome Res.">
        <title>The status, quality, and expansion of the NIH full-length cDNA project: the Mammalian Gene Collection (MGC).</title>
        <authorList>
            <consortium name="The MGC Project Team"/>
        </authorList>
    </citation>
    <scope>NUCLEOTIDE SEQUENCE [LARGE SCALE MRNA] (ISOFORMS 1 AND 3)</scope>
    <scope>VARIANT LEU-13</scope>
    <source>
        <tissue>Cervix</tissue>
        <tissue>Eye</tissue>
        <tissue>Muscle</tissue>
    </source>
</reference>
<reference key="6">
    <citation type="journal article" date="2010" name="Hum. Mol. Genet.">
        <title>Relative tissue expression of homologous torsinB correlates with the neuronal specific importance of DYT1 dystonia-associated torsinA.</title>
        <authorList>
            <person name="Jungwirth M."/>
            <person name="Dear M.L."/>
            <person name="Brown P."/>
            <person name="Holbrook K."/>
            <person name="Goodchild R."/>
        </authorList>
    </citation>
    <scope>SUBCELLULAR LOCATION</scope>
    <scope>GLYCOSYLATION</scope>
    <scope>SUBUNIT</scope>
    <scope>MUTAGENESIS OF GLU-236</scope>
</reference>
<reference key="7">
    <citation type="journal article" date="2011" name="BMC Syst. Biol.">
        <title>Initial characterization of the human central proteome.</title>
        <authorList>
            <person name="Burkard T.R."/>
            <person name="Planyavsky M."/>
            <person name="Kaupe I."/>
            <person name="Breitwieser F.P."/>
            <person name="Buerckstuemmer T."/>
            <person name="Bennett K.L."/>
            <person name="Superti-Furga G."/>
            <person name="Colinge J."/>
        </authorList>
    </citation>
    <scope>IDENTIFICATION BY MASS SPECTROMETRY [LARGE SCALE ANALYSIS]</scope>
</reference>
<gene>
    <name type="primary">TOR3A</name>
    <name type="synonym">ADIR</name>
</gene>
<name>TOR3A_HUMAN</name>
<proteinExistence type="evidence at protein level"/>